<dbReference type="EC" id="5.2.1.8"/>
<dbReference type="EMBL" id="CU329670">
    <property type="protein sequence ID" value="CAA93295.1"/>
    <property type="molecule type" value="Genomic_DNA"/>
</dbReference>
<dbReference type="PIR" id="T38464">
    <property type="entry name" value="T38464"/>
</dbReference>
<dbReference type="SMR" id="Q10175"/>
<dbReference type="BioGRID" id="277981">
    <property type="interactions" value="24"/>
</dbReference>
<dbReference type="FunCoup" id="Q10175">
    <property type="interactions" value="23"/>
</dbReference>
<dbReference type="STRING" id="284812.Q10175"/>
<dbReference type="iPTMnet" id="Q10175"/>
<dbReference type="PaxDb" id="4896-SPAC27F1.06c.1"/>
<dbReference type="EnsemblFungi" id="SPAC27F1.06c.1">
    <property type="protein sequence ID" value="SPAC27F1.06c.1:pep"/>
    <property type="gene ID" value="SPAC27F1.06c"/>
</dbReference>
<dbReference type="KEGG" id="spo:2541479"/>
<dbReference type="PomBase" id="SPAC27F1.06c"/>
<dbReference type="VEuPathDB" id="FungiDB:SPAC27F1.06c"/>
<dbReference type="eggNOG" id="KOG0552">
    <property type="taxonomic scope" value="Eukaryota"/>
</dbReference>
<dbReference type="HOGENOM" id="CLU_022297_3_0_1"/>
<dbReference type="InParanoid" id="Q10175"/>
<dbReference type="OMA" id="KRVSMRY"/>
<dbReference type="PhylomeDB" id="Q10175"/>
<dbReference type="PRO" id="PR:Q10175"/>
<dbReference type="Proteomes" id="UP000002485">
    <property type="component" value="Chromosome I"/>
</dbReference>
<dbReference type="GO" id="GO:0000785">
    <property type="term" value="C:chromatin"/>
    <property type="evidence" value="ECO:0000314"/>
    <property type="project" value="PomBase"/>
</dbReference>
<dbReference type="GO" id="GO:0030874">
    <property type="term" value="C:nucleolar chromatin"/>
    <property type="evidence" value="ECO:0000269"/>
    <property type="project" value="PomBase"/>
</dbReference>
<dbReference type="GO" id="GO:0005730">
    <property type="term" value="C:nucleolus"/>
    <property type="evidence" value="ECO:0007005"/>
    <property type="project" value="PomBase"/>
</dbReference>
<dbReference type="GO" id="GO:0030684">
    <property type="term" value="C:preribosome"/>
    <property type="evidence" value="ECO:0000314"/>
    <property type="project" value="PomBase"/>
</dbReference>
<dbReference type="GO" id="GO:0003755">
    <property type="term" value="F:peptidyl-prolyl cis-trans isomerase activity"/>
    <property type="evidence" value="ECO:0000269"/>
    <property type="project" value="PomBase"/>
</dbReference>
<dbReference type="GO" id="GO:0006338">
    <property type="term" value="P:chromatin remodeling"/>
    <property type="evidence" value="ECO:0000305"/>
    <property type="project" value="PomBase"/>
</dbReference>
<dbReference type="FunFam" id="2.60.120.340:FF:000006">
    <property type="entry name" value="FK506-binding protein"/>
    <property type="match status" value="1"/>
</dbReference>
<dbReference type="Gene3D" id="3.10.50.40">
    <property type="match status" value="1"/>
</dbReference>
<dbReference type="Gene3D" id="2.60.120.340">
    <property type="entry name" value="Nucleoplasmin core domain"/>
    <property type="match status" value="1"/>
</dbReference>
<dbReference type="InterPro" id="IPR041232">
    <property type="entry name" value="NPL"/>
</dbReference>
<dbReference type="InterPro" id="IPR046357">
    <property type="entry name" value="PPIase_dom_sf"/>
</dbReference>
<dbReference type="InterPro" id="IPR001179">
    <property type="entry name" value="PPIase_FKBP_dom"/>
</dbReference>
<dbReference type="InterPro" id="IPR023566">
    <property type="entry name" value="PPIase_Fpr3/Fpr4-like"/>
</dbReference>
<dbReference type="PANTHER" id="PTHR43811:SF19">
    <property type="entry name" value="39 KDA FK506-BINDING NUCLEAR PROTEIN"/>
    <property type="match status" value="1"/>
</dbReference>
<dbReference type="PANTHER" id="PTHR43811">
    <property type="entry name" value="FKBP-TYPE PEPTIDYL-PROLYL CIS-TRANS ISOMERASE FKPA"/>
    <property type="match status" value="1"/>
</dbReference>
<dbReference type="Pfam" id="PF00254">
    <property type="entry name" value="FKBP_C"/>
    <property type="match status" value="1"/>
</dbReference>
<dbReference type="Pfam" id="PF17800">
    <property type="entry name" value="NPL"/>
    <property type="match status" value="1"/>
</dbReference>
<dbReference type="PIRSF" id="PIRSF001473">
    <property type="entry name" value="FK506-bp_FPR3"/>
    <property type="match status" value="1"/>
</dbReference>
<dbReference type="SUPFAM" id="SSF54534">
    <property type="entry name" value="FKBP-like"/>
    <property type="match status" value="1"/>
</dbReference>
<dbReference type="PROSITE" id="PS50059">
    <property type="entry name" value="FKBP_PPIASE"/>
    <property type="match status" value="1"/>
</dbReference>
<sequence length="362" mass="40540">MSKEETLYSVKVDQERVPLFDEDFYKGFRSELSVRFTMAALDPRAKSNDAVTVNVITRLEHPEEDGEESDEELFQEEKFTLCTLKKGSVYQQPIDIIFSPGEEVFFERVGGDIPVYLSGTCIITNIPEEEDSSDLENDFLYGADEFSSDEEEMDDISVTSSEEEEEENGARIEELNSDEEDAEQAEEEILEKPVPKDEVAEKHSKDKLKKEEKEKKTAVDVSDSVNGKKRKTEPAGEGEQTEKKSKSTKTYPKQVLEGNVTVQDKVKGDGPAAKRKKRVSMRYIGRLTNGKVFDKNITGKPFTFNLGLEEVIKGWDVGIVGMQVGGERTIHIPAAMAYGSKRLPGIPANSDLVFDVKLLAVN</sequence>
<organism>
    <name type="scientific">Schizosaccharomyces pombe (strain 972 / ATCC 24843)</name>
    <name type="common">Fission yeast</name>
    <dbReference type="NCBI Taxonomy" id="284812"/>
    <lineage>
        <taxon>Eukaryota</taxon>
        <taxon>Fungi</taxon>
        <taxon>Dikarya</taxon>
        <taxon>Ascomycota</taxon>
        <taxon>Taphrinomycotina</taxon>
        <taxon>Schizosaccharomycetes</taxon>
        <taxon>Schizosaccharomycetales</taxon>
        <taxon>Schizosaccharomycetaceae</taxon>
        <taxon>Schizosaccharomyces</taxon>
    </lineage>
</organism>
<accession>Q10175</accession>
<comment type="function">
    <text evidence="1">PPIases accelerate the folding of proteins. It catalyzes the cis-trans isomerization of proline imidic peptide bonds in oligopeptides (By similarity).</text>
</comment>
<comment type="catalytic activity">
    <reaction>
        <text>[protein]-peptidylproline (omega=180) = [protein]-peptidylproline (omega=0)</text>
        <dbReference type="Rhea" id="RHEA:16237"/>
        <dbReference type="Rhea" id="RHEA-COMP:10747"/>
        <dbReference type="Rhea" id="RHEA-COMP:10748"/>
        <dbReference type="ChEBI" id="CHEBI:83833"/>
        <dbReference type="ChEBI" id="CHEBI:83834"/>
        <dbReference type="EC" id="5.2.1.8"/>
    </reaction>
</comment>
<comment type="similarity">
    <text evidence="5">Belongs to the FKBP-type PPIase family. FKBP3/4 subfamily.</text>
</comment>
<proteinExistence type="evidence at protein level"/>
<protein>
    <recommendedName>
        <fullName>Probable peptidyl-prolyl cis-trans isomerase C27F1.06c</fullName>
        <shortName>PPIase</shortName>
        <ecNumber>5.2.1.8</ecNumber>
    </recommendedName>
    <alternativeName>
        <fullName>Rotamase</fullName>
    </alternativeName>
</protein>
<gene>
    <name type="ORF">SPAC27F1.06c</name>
</gene>
<name>FKBPH_SCHPO</name>
<feature type="chain" id="PRO_0000075316" description="Probable peptidyl-prolyl cis-trans isomerase C27F1.06c">
    <location>
        <begin position="1"/>
        <end position="362"/>
    </location>
</feature>
<feature type="domain" description="PPIase FKBP-type" evidence="2">
    <location>
        <begin position="276"/>
        <end position="362"/>
    </location>
</feature>
<feature type="region of interest" description="Disordered" evidence="3">
    <location>
        <begin position="144"/>
        <end position="274"/>
    </location>
</feature>
<feature type="compositionally biased region" description="Acidic residues" evidence="3">
    <location>
        <begin position="146"/>
        <end position="167"/>
    </location>
</feature>
<feature type="compositionally biased region" description="Acidic residues" evidence="3">
    <location>
        <begin position="175"/>
        <end position="189"/>
    </location>
</feature>
<feature type="compositionally biased region" description="Basic and acidic residues" evidence="3">
    <location>
        <begin position="190"/>
        <end position="218"/>
    </location>
</feature>
<feature type="modified residue" description="Phosphoserine" evidence="4">
    <location>
        <position position="69"/>
    </location>
</feature>
<feature type="modified residue" description="Phosphoserine" evidence="4">
    <location>
        <position position="177"/>
    </location>
</feature>
<evidence type="ECO:0000250" key="1"/>
<evidence type="ECO:0000255" key="2">
    <source>
        <dbReference type="PROSITE-ProRule" id="PRU00277"/>
    </source>
</evidence>
<evidence type="ECO:0000256" key="3">
    <source>
        <dbReference type="SAM" id="MobiDB-lite"/>
    </source>
</evidence>
<evidence type="ECO:0000269" key="4">
    <source>
    </source>
</evidence>
<evidence type="ECO:0000305" key="5"/>
<reference key="1">
    <citation type="journal article" date="2002" name="Nature">
        <title>The genome sequence of Schizosaccharomyces pombe.</title>
        <authorList>
            <person name="Wood V."/>
            <person name="Gwilliam R."/>
            <person name="Rajandream M.A."/>
            <person name="Lyne M.H."/>
            <person name="Lyne R."/>
            <person name="Stewart A."/>
            <person name="Sgouros J.G."/>
            <person name="Peat N."/>
            <person name="Hayles J."/>
            <person name="Baker S.G."/>
            <person name="Basham D."/>
            <person name="Bowman S."/>
            <person name="Brooks K."/>
            <person name="Brown D."/>
            <person name="Brown S."/>
            <person name="Chillingworth T."/>
            <person name="Churcher C.M."/>
            <person name="Collins M."/>
            <person name="Connor R."/>
            <person name="Cronin A."/>
            <person name="Davis P."/>
            <person name="Feltwell T."/>
            <person name="Fraser A."/>
            <person name="Gentles S."/>
            <person name="Goble A."/>
            <person name="Hamlin N."/>
            <person name="Harris D.E."/>
            <person name="Hidalgo J."/>
            <person name="Hodgson G."/>
            <person name="Holroyd S."/>
            <person name="Hornsby T."/>
            <person name="Howarth S."/>
            <person name="Huckle E.J."/>
            <person name="Hunt S."/>
            <person name="Jagels K."/>
            <person name="James K.D."/>
            <person name="Jones L."/>
            <person name="Jones M."/>
            <person name="Leather S."/>
            <person name="McDonald S."/>
            <person name="McLean J."/>
            <person name="Mooney P."/>
            <person name="Moule S."/>
            <person name="Mungall K.L."/>
            <person name="Murphy L.D."/>
            <person name="Niblett D."/>
            <person name="Odell C."/>
            <person name="Oliver K."/>
            <person name="O'Neil S."/>
            <person name="Pearson D."/>
            <person name="Quail M.A."/>
            <person name="Rabbinowitsch E."/>
            <person name="Rutherford K.M."/>
            <person name="Rutter S."/>
            <person name="Saunders D."/>
            <person name="Seeger K."/>
            <person name="Sharp S."/>
            <person name="Skelton J."/>
            <person name="Simmonds M.N."/>
            <person name="Squares R."/>
            <person name="Squares S."/>
            <person name="Stevens K."/>
            <person name="Taylor K."/>
            <person name="Taylor R.G."/>
            <person name="Tivey A."/>
            <person name="Walsh S.V."/>
            <person name="Warren T."/>
            <person name="Whitehead S."/>
            <person name="Woodward J.R."/>
            <person name="Volckaert G."/>
            <person name="Aert R."/>
            <person name="Robben J."/>
            <person name="Grymonprez B."/>
            <person name="Weltjens I."/>
            <person name="Vanstreels E."/>
            <person name="Rieger M."/>
            <person name="Schaefer M."/>
            <person name="Mueller-Auer S."/>
            <person name="Gabel C."/>
            <person name="Fuchs M."/>
            <person name="Duesterhoeft A."/>
            <person name="Fritzc C."/>
            <person name="Holzer E."/>
            <person name="Moestl D."/>
            <person name="Hilbert H."/>
            <person name="Borzym K."/>
            <person name="Langer I."/>
            <person name="Beck A."/>
            <person name="Lehrach H."/>
            <person name="Reinhardt R."/>
            <person name="Pohl T.M."/>
            <person name="Eger P."/>
            <person name="Zimmermann W."/>
            <person name="Wedler H."/>
            <person name="Wambutt R."/>
            <person name="Purnelle B."/>
            <person name="Goffeau A."/>
            <person name="Cadieu E."/>
            <person name="Dreano S."/>
            <person name="Gloux S."/>
            <person name="Lelaure V."/>
            <person name="Mottier S."/>
            <person name="Galibert F."/>
            <person name="Aves S.J."/>
            <person name="Xiang Z."/>
            <person name="Hunt C."/>
            <person name="Moore K."/>
            <person name="Hurst S.M."/>
            <person name="Lucas M."/>
            <person name="Rochet M."/>
            <person name="Gaillardin C."/>
            <person name="Tallada V.A."/>
            <person name="Garzon A."/>
            <person name="Thode G."/>
            <person name="Daga R.R."/>
            <person name="Cruzado L."/>
            <person name="Jimenez J."/>
            <person name="Sanchez M."/>
            <person name="del Rey F."/>
            <person name="Benito J."/>
            <person name="Dominguez A."/>
            <person name="Revuelta J.L."/>
            <person name="Moreno S."/>
            <person name="Armstrong J."/>
            <person name="Forsburg S.L."/>
            <person name="Cerutti L."/>
            <person name="Lowe T."/>
            <person name="McCombie W.R."/>
            <person name="Paulsen I."/>
            <person name="Potashkin J."/>
            <person name="Shpakovski G.V."/>
            <person name="Ussery D."/>
            <person name="Barrell B.G."/>
            <person name="Nurse P."/>
        </authorList>
    </citation>
    <scope>NUCLEOTIDE SEQUENCE [LARGE SCALE GENOMIC DNA]</scope>
    <source>
        <strain>972 / ATCC 24843</strain>
    </source>
</reference>
<reference key="2">
    <citation type="journal article" date="2008" name="J. Proteome Res.">
        <title>Phosphoproteome analysis of fission yeast.</title>
        <authorList>
            <person name="Wilson-Grady J.T."/>
            <person name="Villen J."/>
            <person name="Gygi S.P."/>
        </authorList>
    </citation>
    <scope>PHOSPHORYLATION [LARGE SCALE ANALYSIS] AT SER-69 AND SER-177</scope>
    <scope>IDENTIFICATION BY MASS SPECTROMETRY</scope>
</reference>
<keyword id="KW-0413">Isomerase</keyword>
<keyword id="KW-0597">Phosphoprotein</keyword>
<keyword id="KW-1185">Reference proteome</keyword>
<keyword id="KW-0697">Rotamase</keyword>